<proteinExistence type="evidence at transcript level"/>
<comment type="function">
    <text evidence="1 3">Arginine methyltransferase involved in the assembly or stability of mitochondrial NADH:ubiquinone oxidoreductase complex (complex I) (PubMed:24838397). Acts by mediating symmetric dimethylation of 'Arg-118' of ndufs2 after it assembles into the complex I, stabilizing the early intermediate complex.</text>
</comment>
<comment type="catalytic activity">
    <reaction evidence="1">
        <text>L-arginyl-[protein] + 2 S-adenosyl-L-methionine = N(omega),N(omega)'-dimethyl-L-arginyl-[protein] + 2 S-adenosyl-L-homocysteine + 2 H(+)</text>
        <dbReference type="Rhea" id="RHEA:48108"/>
        <dbReference type="Rhea" id="RHEA-COMP:10532"/>
        <dbReference type="Rhea" id="RHEA-COMP:11992"/>
        <dbReference type="ChEBI" id="CHEBI:15378"/>
        <dbReference type="ChEBI" id="CHEBI:29965"/>
        <dbReference type="ChEBI" id="CHEBI:57856"/>
        <dbReference type="ChEBI" id="CHEBI:59789"/>
        <dbReference type="ChEBI" id="CHEBI:88221"/>
        <dbReference type="EC" id="2.1.1.320"/>
    </reaction>
</comment>
<comment type="subcellular location">
    <subcellularLocation>
        <location evidence="1">Mitochondrion</location>
    </subcellularLocation>
</comment>
<comment type="disruption phenotype">
    <text evidence="3">Impaired NADH:ubiquinone oxidoreductase complex (complex I) assembly.</text>
</comment>
<comment type="similarity">
    <text evidence="5">Belongs to the NDUFAF7 family.</text>
</comment>
<feature type="transit peptide" description="Mitochondrion" evidence="2">
    <location>
        <begin position="1"/>
        <end position="28"/>
    </location>
</feature>
<feature type="chain" id="PRO_0000315675" description="Protein arginine methyltransferase NDUFAF7, mitochondrial">
    <location>
        <begin position="29"/>
        <end position="422"/>
    </location>
</feature>
<organism>
    <name type="scientific">Danio rerio</name>
    <name type="common">Zebrafish</name>
    <name type="synonym">Brachydanio rerio</name>
    <dbReference type="NCBI Taxonomy" id="7955"/>
    <lineage>
        <taxon>Eukaryota</taxon>
        <taxon>Metazoa</taxon>
        <taxon>Chordata</taxon>
        <taxon>Craniata</taxon>
        <taxon>Vertebrata</taxon>
        <taxon>Euteleostomi</taxon>
        <taxon>Actinopterygii</taxon>
        <taxon>Neopterygii</taxon>
        <taxon>Teleostei</taxon>
        <taxon>Ostariophysi</taxon>
        <taxon>Cypriniformes</taxon>
        <taxon>Danionidae</taxon>
        <taxon>Danioninae</taxon>
        <taxon>Danio</taxon>
    </lineage>
</organism>
<name>NDUF7_DANRE</name>
<keyword id="KW-0489">Methyltransferase</keyword>
<keyword id="KW-0496">Mitochondrion</keyword>
<keyword id="KW-1185">Reference proteome</keyword>
<keyword id="KW-0808">Transferase</keyword>
<keyword id="KW-0809">Transit peptide</keyword>
<protein>
    <recommendedName>
        <fullName evidence="1">Protein arginine methyltransferase NDUFAF7, mitochondrial</fullName>
        <ecNumber evidence="1">2.1.1.320</ecNumber>
    </recommendedName>
    <alternativeName>
        <fullName evidence="1">NADH dehydrogenase [ubiquinone] complex I, assembly factor 7</fullName>
    </alternativeName>
    <alternativeName>
        <fullName evidence="1">Protein midA homolog</fullName>
    </alternativeName>
</protein>
<evidence type="ECO:0000250" key="1">
    <source>
        <dbReference type="UniProtKB" id="Q7L592"/>
    </source>
</evidence>
<evidence type="ECO:0000255" key="2"/>
<evidence type="ECO:0000269" key="3">
    <source>
    </source>
</evidence>
<evidence type="ECO:0000303" key="4">
    <source ref="1"/>
</evidence>
<evidence type="ECO:0000305" key="5"/>
<accession>Q08BY0</accession>
<reference key="1">
    <citation type="submission" date="2006-09" db="EMBL/GenBank/DDBJ databases">
        <authorList>
            <consortium name="NIH - Zebrafish Gene Collection (ZGC) project"/>
        </authorList>
    </citation>
    <scope>NUCLEOTIDE SEQUENCE [LARGE SCALE MRNA]</scope>
</reference>
<reference key="2">
    <citation type="journal article" date="2014" name="Hum. Mol. Genet.">
        <title>The arginine methyltransferase NDUFAF7 is essential for complex I assembly and early vertebrate embryogenesis.</title>
        <authorList>
            <person name="Zurita Rendon O."/>
            <person name="Silva Neiva L."/>
            <person name="Sasarman F."/>
            <person name="Shoubridge E.A."/>
        </authorList>
    </citation>
    <scope>FUNCTION</scope>
    <scope>DISRUPTION PHENOTYPE</scope>
</reference>
<gene>
    <name evidence="1" type="primary">ndufaf7</name>
    <name evidence="4" type="ORF">zgc:153989</name>
</gene>
<sequence>MRTLLRLKRLMPEVLWTKRSCSSSSINKSILKHLASKIIATGPISVAEYMREALTNPVLGYYVKNDMLGAGGDFITSPEISQIFGELLGVWCISEWMAAGKSSALQLVELGPGRGSLTSDILRVFSQLKGVLGETGISIHLVEVSPKLSQVQAECLTGNQTQTYDNNHTFYRSGTTCTGLPIYWYHSIEDVPRGFSIFLAHEFFDALPIHKFQRTENGWREVLVDIDPENPGKLRFVVSHRPTLASSTLIQKDESRRHVEVCAEAGVIVQKLASRIAEDGGAALIVDYGHDGTKTDTFRGFKGHQIHDVLEAPGLADLTADVDFSYLRKMAGDQVICLGPITQRSFLKNMGIDSRMQVLLSSNDPSIRAQLIHSYDMLINPEKMGERFQFFSVLNTARLAQREQMQKSTVMPVAGFTELEMQ</sequence>
<dbReference type="EC" id="2.1.1.320" evidence="1"/>
<dbReference type="EMBL" id="BC124508">
    <property type="protein sequence ID" value="AAI24509.1"/>
    <property type="molecule type" value="mRNA"/>
</dbReference>
<dbReference type="RefSeq" id="NP_001070231.1">
    <property type="nucleotide sequence ID" value="NM_001076763.1"/>
</dbReference>
<dbReference type="SMR" id="Q08BY0"/>
<dbReference type="FunCoup" id="Q08BY0">
    <property type="interactions" value="1549"/>
</dbReference>
<dbReference type="STRING" id="7955.ENSDARP00000067396"/>
<dbReference type="PaxDb" id="7955-ENSDARP00000067396"/>
<dbReference type="Ensembl" id="ENSDART00000067397">
    <property type="protein sequence ID" value="ENSDARP00000067396"/>
    <property type="gene ID" value="ENSDARG00000033134"/>
</dbReference>
<dbReference type="GeneID" id="767796"/>
<dbReference type="KEGG" id="dre:767796"/>
<dbReference type="AGR" id="ZFIN:ZDB-GENE-060929-628"/>
<dbReference type="CTD" id="55471"/>
<dbReference type="ZFIN" id="ZDB-GENE-060929-628">
    <property type="gene designation" value="ndufaf7"/>
</dbReference>
<dbReference type="eggNOG" id="KOG2901">
    <property type="taxonomic scope" value="Eukaryota"/>
</dbReference>
<dbReference type="HOGENOM" id="CLU_024840_3_1_1"/>
<dbReference type="InParanoid" id="Q08BY0"/>
<dbReference type="OMA" id="YYHPQRN"/>
<dbReference type="OrthoDB" id="438553at2759"/>
<dbReference type="PhylomeDB" id="Q08BY0"/>
<dbReference type="TreeFam" id="TF314312"/>
<dbReference type="PRO" id="PR:Q08BY0"/>
<dbReference type="Proteomes" id="UP000000437">
    <property type="component" value="Chromosome 20"/>
</dbReference>
<dbReference type="Bgee" id="ENSDARG00000033134">
    <property type="expression patterns" value="Expressed in gastrula and 20 other cell types or tissues"/>
</dbReference>
<dbReference type="ExpressionAtlas" id="Q08BY0">
    <property type="expression patterns" value="baseline"/>
</dbReference>
<dbReference type="GO" id="GO:0005739">
    <property type="term" value="C:mitochondrion"/>
    <property type="evidence" value="ECO:0000250"/>
    <property type="project" value="UniProtKB"/>
</dbReference>
<dbReference type="GO" id="GO:0035243">
    <property type="term" value="F:protein-arginine omega-N symmetric methyltransferase activity"/>
    <property type="evidence" value="ECO:0000250"/>
    <property type="project" value="UniProtKB"/>
</dbReference>
<dbReference type="GO" id="GO:0043009">
    <property type="term" value="P:chordate embryonic development"/>
    <property type="evidence" value="ECO:0000315"/>
    <property type="project" value="ZFIN"/>
</dbReference>
<dbReference type="GO" id="GO:0032981">
    <property type="term" value="P:mitochondrial respiratory chain complex I assembly"/>
    <property type="evidence" value="ECO:0000315"/>
    <property type="project" value="UniProtKB"/>
</dbReference>
<dbReference type="GO" id="GO:0019918">
    <property type="term" value="P:peptidyl-arginine methylation, to symmetrical-dimethyl arginine"/>
    <property type="evidence" value="ECO:0000250"/>
    <property type="project" value="UniProtKB"/>
</dbReference>
<dbReference type="FunFam" id="3.40.50.12710:FF:000001">
    <property type="entry name" value="Protein arginine methyltransferase NDUFAF7"/>
    <property type="match status" value="1"/>
</dbReference>
<dbReference type="Gene3D" id="3.40.50.12710">
    <property type="match status" value="1"/>
</dbReference>
<dbReference type="InterPro" id="IPR003788">
    <property type="entry name" value="NDUFAF7"/>
</dbReference>
<dbReference type="InterPro" id="IPR038375">
    <property type="entry name" value="NDUFAF7_sf"/>
</dbReference>
<dbReference type="InterPro" id="IPR029063">
    <property type="entry name" value="SAM-dependent_MTases_sf"/>
</dbReference>
<dbReference type="PANTHER" id="PTHR12049">
    <property type="entry name" value="PROTEIN ARGININE METHYLTRANSFERASE NDUFAF7, MITOCHONDRIAL"/>
    <property type="match status" value="1"/>
</dbReference>
<dbReference type="PANTHER" id="PTHR12049:SF7">
    <property type="entry name" value="PROTEIN ARGININE METHYLTRANSFERASE NDUFAF7, MITOCHONDRIAL"/>
    <property type="match status" value="1"/>
</dbReference>
<dbReference type="Pfam" id="PF02636">
    <property type="entry name" value="Methyltransf_28"/>
    <property type="match status" value="1"/>
</dbReference>
<dbReference type="SUPFAM" id="SSF53335">
    <property type="entry name" value="S-adenosyl-L-methionine-dependent methyltransferases"/>
    <property type="match status" value="1"/>
</dbReference>